<protein>
    <recommendedName>
        <fullName evidence="1">Aspartyl/glutamyl-tRNA(Asn/Gln) amidotransferase subunit C</fullName>
        <shortName evidence="1">Asp/Glu-ADT subunit C</shortName>
        <ecNumber evidence="1">6.3.5.-</ecNumber>
    </recommendedName>
</protein>
<accession>Q8FPZ1</accession>
<feature type="chain" id="PRO_0000105295" description="Aspartyl/glutamyl-tRNA(Asn/Gln) amidotransferase subunit C">
    <location>
        <begin position="1"/>
        <end position="99"/>
    </location>
</feature>
<keyword id="KW-0067">ATP-binding</keyword>
<keyword id="KW-0436">Ligase</keyword>
<keyword id="KW-0547">Nucleotide-binding</keyword>
<keyword id="KW-0648">Protein biosynthesis</keyword>
<keyword id="KW-1185">Reference proteome</keyword>
<sequence length="99" mass="10772">MPEISRDQVAHLAKLARLALSEEELQQFAGQIDDIVGHVSAVQNVDAEGVEPMSHPHSIMTTMRDDVVVKTLTPEQALDQAPAVEDGRFMVPQILGEGD</sequence>
<proteinExistence type="inferred from homology"/>
<gene>
    <name evidence="1" type="primary">gatC</name>
    <name type="ordered locus">CE1344</name>
</gene>
<dbReference type="EC" id="6.3.5.-" evidence="1"/>
<dbReference type="EMBL" id="BA000035">
    <property type="protein sequence ID" value="BAC18154.1"/>
    <property type="molecule type" value="Genomic_DNA"/>
</dbReference>
<dbReference type="RefSeq" id="WP_006769308.1">
    <property type="nucleotide sequence ID" value="NC_004369.1"/>
</dbReference>
<dbReference type="SMR" id="Q8FPZ1"/>
<dbReference type="STRING" id="196164.gene:10741753"/>
<dbReference type="KEGG" id="cef:CE1344"/>
<dbReference type="eggNOG" id="COG0721">
    <property type="taxonomic scope" value="Bacteria"/>
</dbReference>
<dbReference type="HOGENOM" id="CLU_105899_1_0_11"/>
<dbReference type="OrthoDB" id="5295223at2"/>
<dbReference type="Proteomes" id="UP000001409">
    <property type="component" value="Chromosome"/>
</dbReference>
<dbReference type="GO" id="GO:0050566">
    <property type="term" value="F:asparaginyl-tRNA synthase (glutamine-hydrolyzing) activity"/>
    <property type="evidence" value="ECO:0007669"/>
    <property type="project" value="RHEA"/>
</dbReference>
<dbReference type="GO" id="GO:0005524">
    <property type="term" value="F:ATP binding"/>
    <property type="evidence" value="ECO:0007669"/>
    <property type="project" value="UniProtKB-KW"/>
</dbReference>
<dbReference type="GO" id="GO:0050567">
    <property type="term" value="F:glutaminyl-tRNA synthase (glutamine-hydrolyzing) activity"/>
    <property type="evidence" value="ECO:0007669"/>
    <property type="project" value="UniProtKB-UniRule"/>
</dbReference>
<dbReference type="GO" id="GO:0070681">
    <property type="term" value="P:glutaminyl-tRNAGln biosynthesis via transamidation"/>
    <property type="evidence" value="ECO:0007669"/>
    <property type="project" value="TreeGrafter"/>
</dbReference>
<dbReference type="GO" id="GO:0006450">
    <property type="term" value="P:regulation of translational fidelity"/>
    <property type="evidence" value="ECO:0007669"/>
    <property type="project" value="InterPro"/>
</dbReference>
<dbReference type="GO" id="GO:0006412">
    <property type="term" value="P:translation"/>
    <property type="evidence" value="ECO:0007669"/>
    <property type="project" value="UniProtKB-UniRule"/>
</dbReference>
<dbReference type="Gene3D" id="1.10.20.60">
    <property type="entry name" value="Glu-tRNAGln amidotransferase C subunit, N-terminal domain"/>
    <property type="match status" value="1"/>
</dbReference>
<dbReference type="HAMAP" id="MF_00122">
    <property type="entry name" value="GatC"/>
    <property type="match status" value="1"/>
</dbReference>
<dbReference type="InterPro" id="IPR036113">
    <property type="entry name" value="Asp/Glu-ADT_sf_sub_c"/>
</dbReference>
<dbReference type="InterPro" id="IPR003837">
    <property type="entry name" value="GatC"/>
</dbReference>
<dbReference type="NCBIfam" id="TIGR00135">
    <property type="entry name" value="gatC"/>
    <property type="match status" value="1"/>
</dbReference>
<dbReference type="PANTHER" id="PTHR15004">
    <property type="entry name" value="GLUTAMYL-TRNA(GLN) AMIDOTRANSFERASE SUBUNIT C, MITOCHONDRIAL"/>
    <property type="match status" value="1"/>
</dbReference>
<dbReference type="PANTHER" id="PTHR15004:SF0">
    <property type="entry name" value="GLUTAMYL-TRNA(GLN) AMIDOTRANSFERASE SUBUNIT C, MITOCHONDRIAL"/>
    <property type="match status" value="1"/>
</dbReference>
<dbReference type="Pfam" id="PF02686">
    <property type="entry name" value="GatC"/>
    <property type="match status" value="1"/>
</dbReference>
<dbReference type="SUPFAM" id="SSF141000">
    <property type="entry name" value="Glu-tRNAGln amidotransferase C subunit"/>
    <property type="match status" value="1"/>
</dbReference>
<comment type="function">
    <text evidence="1">Allows the formation of correctly charged Asn-tRNA(Asn) or Gln-tRNA(Gln) through the transamidation of misacylated Asp-tRNA(Asn) or Glu-tRNA(Gln) in organisms which lack either or both of asparaginyl-tRNA or glutaminyl-tRNA synthetases. The reaction takes place in the presence of glutamine and ATP through an activated phospho-Asp-tRNA(Asn) or phospho-Glu-tRNA(Gln).</text>
</comment>
<comment type="catalytic activity">
    <reaction evidence="1">
        <text>L-glutamyl-tRNA(Gln) + L-glutamine + ATP + H2O = L-glutaminyl-tRNA(Gln) + L-glutamate + ADP + phosphate + H(+)</text>
        <dbReference type="Rhea" id="RHEA:17521"/>
        <dbReference type="Rhea" id="RHEA-COMP:9681"/>
        <dbReference type="Rhea" id="RHEA-COMP:9684"/>
        <dbReference type="ChEBI" id="CHEBI:15377"/>
        <dbReference type="ChEBI" id="CHEBI:15378"/>
        <dbReference type="ChEBI" id="CHEBI:29985"/>
        <dbReference type="ChEBI" id="CHEBI:30616"/>
        <dbReference type="ChEBI" id="CHEBI:43474"/>
        <dbReference type="ChEBI" id="CHEBI:58359"/>
        <dbReference type="ChEBI" id="CHEBI:78520"/>
        <dbReference type="ChEBI" id="CHEBI:78521"/>
        <dbReference type="ChEBI" id="CHEBI:456216"/>
    </reaction>
</comment>
<comment type="catalytic activity">
    <reaction evidence="1">
        <text>L-aspartyl-tRNA(Asn) + L-glutamine + ATP + H2O = L-asparaginyl-tRNA(Asn) + L-glutamate + ADP + phosphate + 2 H(+)</text>
        <dbReference type="Rhea" id="RHEA:14513"/>
        <dbReference type="Rhea" id="RHEA-COMP:9674"/>
        <dbReference type="Rhea" id="RHEA-COMP:9677"/>
        <dbReference type="ChEBI" id="CHEBI:15377"/>
        <dbReference type="ChEBI" id="CHEBI:15378"/>
        <dbReference type="ChEBI" id="CHEBI:29985"/>
        <dbReference type="ChEBI" id="CHEBI:30616"/>
        <dbReference type="ChEBI" id="CHEBI:43474"/>
        <dbReference type="ChEBI" id="CHEBI:58359"/>
        <dbReference type="ChEBI" id="CHEBI:78515"/>
        <dbReference type="ChEBI" id="CHEBI:78516"/>
        <dbReference type="ChEBI" id="CHEBI:456216"/>
    </reaction>
</comment>
<comment type="subunit">
    <text evidence="1">Heterotrimer of A, B and C subunits.</text>
</comment>
<comment type="similarity">
    <text evidence="1">Belongs to the GatC family.</text>
</comment>
<name>GATC_COREF</name>
<evidence type="ECO:0000255" key="1">
    <source>
        <dbReference type="HAMAP-Rule" id="MF_00122"/>
    </source>
</evidence>
<organism>
    <name type="scientific">Corynebacterium efficiens (strain DSM 44549 / YS-314 / AJ 12310 / JCM 11189 / NBRC 100395)</name>
    <dbReference type="NCBI Taxonomy" id="196164"/>
    <lineage>
        <taxon>Bacteria</taxon>
        <taxon>Bacillati</taxon>
        <taxon>Actinomycetota</taxon>
        <taxon>Actinomycetes</taxon>
        <taxon>Mycobacteriales</taxon>
        <taxon>Corynebacteriaceae</taxon>
        <taxon>Corynebacterium</taxon>
    </lineage>
</organism>
<reference key="1">
    <citation type="journal article" date="2003" name="Genome Res.">
        <title>Comparative complete genome sequence analysis of the amino acid replacements responsible for the thermostability of Corynebacterium efficiens.</title>
        <authorList>
            <person name="Nishio Y."/>
            <person name="Nakamura Y."/>
            <person name="Kawarabayasi Y."/>
            <person name="Usuda Y."/>
            <person name="Kimura E."/>
            <person name="Sugimoto S."/>
            <person name="Matsui K."/>
            <person name="Yamagishi A."/>
            <person name="Kikuchi H."/>
            <person name="Ikeo K."/>
            <person name="Gojobori T."/>
        </authorList>
    </citation>
    <scope>NUCLEOTIDE SEQUENCE [LARGE SCALE GENOMIC DNA]</scope>
    <source>
        <strain>DSM 44549 / YS-314 / AJ 12310 / JCM 11189 / NBRC 100395</strain>
    </source>
</reference>